<feature type="chain" id="PRO_0000279719" description="V-type proton ATPase subunit D">
    <location>
        <begin position="1"/>
        <end position="259"/>
    </location>
</feature>
<feature type="region of interest" description="Disordered" evidence="4">
    <location>
        <begin position="214"/>
        <end position="259"/>
    </location>
</feature>
<name>VATD_CAEBR</name>
<evidence type="ECO:0000250" key="1">
    <source>
        <dbReference type="UniProtKB" id="P34462"/>
    </source>
</evidence>
<evidence type="ECO:0000250" key="2">
    <source>
        <dbReference type="UniProtKB" id="P39942"/>
    </source>
</evidence>
<evidence type="ECO:0000255" key="3"/>
<evidence type="ECO:0000256" key="4">
    <source>
        <dbReference type="SAM" id="MobiDB-lite"/>
    </source>
</evidence>
<evidence type="ECO:0000312" key="5">
    <source>
        <dbReference type="WormBase" id="CBG10070"/>
    </source>
</evidence>
<sequence>MSGGGGKDRIAVFPSRMAQTLMKTRLKGAQKGHSLLKKKADALNLRFRDILKKIVENKVLMGEVMKEAAFSLAEAKFTAGDFSHTVIQNVSQAQYRVRMKKENVVGVLLPVFDAYQDGPDAYDLTGLGKGGANIARLKKNYNKAIELLVELATLQTCFITLDEAIKVTNRRVNAIEHVIIPRIENTLTYIVTELDEMEREEFFRMKKIQANKKKLKEQEAAQRALEGPPKEEAGGTHSENQPPRNLLAVEEDNLPVLFN</sequence>
<reference key="1">
    <citation type="journal article" date="2003" name="PLoS Biol.">
        <title>The genome sequence of Caenorhabditis briggsae: a platform for comparative genomics.</title>
        <authorList>
            <person name="Stein L.D."/>
            <person name="Bao Z."/>
            <person name="Blasiar D."/>
            <person name="Blumenthal T."/>
            <person name="Brent M.R."/>
            <person name="Chen N."/>
            <person name="Chinwalla A."/>
            <person name="Clarke L."/>
            <person name="Clee C."/>
            <person name="Coghlan A."/>
            <person name="Coulson A."/>
            <person name="D'Eustachio P."/>
            <person name="Fitch D.H.A."/>
            <person name="Fulton L.A."/>
            <person name="Fulton R.E."/>
            <person name="Griffiths-Jones S."/>
            <person name="Harris T.W."/>
            <person name="Hillier L.W."/>
            <person name="Kamath R."/>
            <person name="Kuwabara P.E."/>
            <person name="Mardis E.R."/>
            <person name="Marra M.A."/>
            <person name="Miner T.L."/>
            <person name="Minx P."/>
            <person name="Mullikin J.C."/>
            <person name="Plumb R.W."/>
            <person name="Rogers J."/>
            <person name="Schein J.E."/>
            <person name="Sohrmann M."/>
            <person name="Spieth J."/>
            <person name="Stajich J.E."/>
            <person name="Wei C."/>
            <person name="Willey D."/>
            <person name="Wilson R.K."/>
            <person name="Durbin R.M."/>
            <person name="Waterston R.H."/>
        </authorList>
    </citation>
    <scope>NUCLEOTIDE SEQUENCE [LARGE SCALE GENOMIC DNA]</scope>
    <source>
        <strain>AF16</strain>
    </source>
</reference>
<organism>
    <name type="scientific">Caenorhabditis briggsae</name>
    <dbReference type="NCBI Taxonomy" id="6238"/>
    <lineage>
        <taxon>Eukaryota</taxon>
        <taxon>Metazoa</taxon>
        <taxon>Ecdysozoa</taxon>
        <taxon>Nematoda</taxon>
        <taxon>Chromadorea</taxon>
        <taxon>Rhabditida</taxon>
        <taxon>Rhabditina</taxon>
        <taxon>Rhabditomorpha</taxon>
        <taxon>Rhabditoidea</taxon>
        <taxon>Rhabditidae</taxon>
        <taxon>Peloderinae</taxon>
        <taxon>Caenorhabditis</taxon>
    </lineage>
</organism>
<accession>Q61IU3</accession>
<accession>A8XAB2</accession>
<comment type="function">
    <text evidence="2">Subunit of the V1 complex of vacuolar(H+)-ATPase (V-ATPase), a multisubunit enzyme composed of a peripheral complex (V1) that hydrolyzes ATP and a membrane integral complex (V0) that translocates protons. V-ATPase is responsible for acidifying and maintaining the pH of intracellular compartments and in some cell types, is targeted to the plasma membrane, where it is responsible for acidifying the extracellular environment.</text>
</comment>
<comment type="subunit">
    <text evidence="2">V-ATPase is a heteromultimeric enzyme made up of two complexes: the ATP-hydrolytic V1 complex and the proton translocation V0 complex. The V1 complex consists of three catalytic AB heterodimers that form a heterohexamer, three peripheral stalks each consisting of EG heterodimers, one central rotor including subunits D and F, and the regulatory subunits C and H. The proton translocation complex V0 consists of the proton transport subunit a, a ring of proteolipid subunits c9c'', rotary subunit d, and The proton translocation complex V0 consists of the proton transport subunit a, a ring of proteolipid subunits c9c'', rotary subunit d, subunits e and f, and the accessory subunits vah-19/Ac45 and vah-20/PRR.</text>
</comment>
<comment type="similarity">
    <text evidence="3">Belongs to the V-ATPase D subunit family.</text>
</comment>
<protein>
    <recommendedName>
        <fullName>V-type proton ATPase subunit D</fullName>
        <shortName>V-ATPase subunit D</shortName>
    </recommendedName>
    <alternativeName>
        <fullName>Vacuolar proton pump subunit D</fullName>
    </alternativeName>
</protein>
<dbReference type="EMBL" id="HE601459">
    <property type="protein sequence ID" value="CAP29580.3"/>
    <property type="molecule type" value="Genomic_DNA"/>
</dbReference>
<dbReference type="SMR" id="Q61IU3"/>
<dbReference type="FunCoup" id="Q61IU3">
    <property type="interactions" value="2175"/>
</dbReference>
<dbReference type="STRING" id="6238.Q61IU3"/>
<dbReference type="EnsemblMetazoa" id="CBG10070.1">
    <property type="protein sequence ID" value="CBG10070.1"/>
    <property type="gene ID" value="WBGene00031549"/>
</dbReference>
<dbReference type="KEGG" id="cbr:CBG_10070"/>
<dbReference type="CTD" id="8583725"/>
<dbReference type="WormBase" id="CBG10070">
    <property type="protein sequence ID" value="CBP08378"/>
    <property type="gene ID" value="WBGene00031549"/>
    <property type="gene designation" value="Cbr-vha-14"/>
</dbReference>
<dbReference type="eggNOG" id="KOG1647">
    <property type="taxonomic scope" value="Eukaryota"/>
</dbReference>
<dbReference type="HOGENOM" id="CLU_069688_0_0_1"/>
<dbReference type="InParanoid" id="Q61IU3"/>
<dbReference type="OMA" id="REEFFRM"/>
<dbReference type="OrthoDB" id="7676488at2759"/>
<dbReference type="Proteomes" id="UP000008549">
    <property type="component" value="Unassembled WGS sequence"/>
</dbReference>
<dbReference type="GO" id="GO:0033176">
    <property type="term" value="C:proton-transporting V-type ATPase complex"/>
    <property type="evidence" value="ECO:0000318"/>
    <property type="project" value="GO_Central"/>
</dbReference>
<dbReference type="GO" id="GO:0046961">
    <property type="term" value="F:proton-transporting ATPase activity, rotational mechanism"/>
    <property type="evidence" value="ECO:0007669"/>
    <property type="project" value="InterPro"/>
</dbReference>
<dbReference type="FunFam" id="1.10.287.3240:FF:000011">
    <property type="entry name" value="V-type proton ATPase subunit D"/>
    <property type="match status" value="1"/>
</dbReference>
<dbReference type="Gene3D" id="1.10.287.3240">
    <property type="match status" value="1"/>
</dbReference>
<dbReference type="InterPro" id="IPR002699">
    <property type="entry name" value="V_ATPase_D"/>
</dbReference>
<dbReference type="NCBIfam" id="TIGR00309">
    <property type="entry name" value="V_ATPase_subD"/>
    <property type="match status" value="1"/>
</dbReference>
<dbReference type="PANTHER" id="PTHR11671">
    <property type="entry name" value="V-TYPE ATP SYNTHASE SUBUNIT D"/>
    <property type="match status" value="1"/>
</dbReference>
<dbReference type="Pfam" id="PF01813">
    <property type="entry name" value="ATP-synt_D"/>
    <property type="match status" value="1"/>
</dbReference>
<keyword id="KW-0375">Hydrogen ion transport</keyword>
<keyword id="KW-0406">Ion transport</keyword>
<keyword id="KW-1185">Reference proteome</keyword>
<keyword id="KW-0813">Transport</keyword>
<proteinExistence type="inferred from homology"/>
<gene>
    <name evidence="1" type="primary">vha-14</name>
    <name evidence="5" type="ORF">CBG10070</name>
</gene>